<name>RL11_CHLCV</name>
<evidence type="ECO:0000255" key="1">
    <source>
        <dbReference type="HAMAP-Rule" id="MF_00736"/>
    </source>
</evidence>
<evidence type="ECO:0000305" key="2"/>
<sequence>MSNKKVIKLIKLQIPGGKANPAPPIGPALGAAGVNIMGFCKEFNAATQDRPGDLLPVVITVYSDKTFTFITKQPPVSSLIKKALNLESGSKIPNRNKVGKLTQAQVTAIAEQKMKDMDVVLLDSAKRMVEGTARSMGIDVE</sequence>
<accession>Q822I7</accession>
<feature type="chain" id="PRO_0000104267" description="Large ribosomal subunit protein uL11">
    <location>
        <begin position="1"/>
        <end position="141"/>
    </location>
</feature>
<proteinExistence type="inferred from homology"/>
<keyword id="KW-0488">Methylation</keyword>
<keyword id="KW-0687">Ribonucleoprotein</keyword>
<keyword id="KW-0689">Ribosomal protein</keyword>
<keyword id="KW-0694">RNA-binding</keyword>
<keyword id="KW-0699">rRNA-binding</keyword>
<dbReference type="EMBL" id="AE015925">
    <property type="protein sequence ID" value="AAP05437.1"/>
    <property type="molecule type" value="Genomic_DNA"/>
</dbReference>
<dbReference type="RefSeq" id="WP_011006652.1">
    <property type="nucleotide sequence ID" value="NC_003361.3"/>
</dbReference>
<dbReference type="SMR" id="Q822I7"/>
<dbReference type="STRING" id="227941.CCA_00695"/>
<dbReference type="KEGG" id="cca:CCA_00695"/>
<dbReference type="eggNOG" id="COG0080">
    <property type="taxonomic scope" value="Bacteria"/>
</dbReference>
<dbReference type="HOGENOM" id="CLU_074237_2_0_0"/>
<dbReference type="OrthoDB" id="9802408at2"/>
<dbReference type="Proteomes" id="UP000002193">
    <property type="component" value="Chromosome"/>
</dbReference>
<dbReference type="GO" id="GO:0022625">
    <property type="term" value="C:cytosolic large ribosomal subunit"/>
    <property type="evidence" value="ECO:0007669"/>
    <property type="project" value="TreeGrafter"/>
</dbReference>
<dbReference type="GO" id="GO:0070180">
    <property type="term" value="F:large ribosomal subunit rRNA binding"/>
    <property type="evidence" value="ECO:0007669"/>
    <property type="project" value="UniProtKB-UniRule"/>
</dbReference>
<dbReference type="GO" id="GO:0003735">
    <property type="term" value="F:structural constituent of ribosome"/>
    <property type="evidence" value="ECO:0007669"/>
    <property type="project" value="InterPro"/>
</dbReference>
<dbReference type="GO" id="GO:0006412">
    <property type="term" value="P:translation"/>
    <property type="evidence" value="ECO:0007669"/>
    <property type="project" value="UniProtKB-UniRule"/>
</dbReference>
<dbReference type="CDD" id="cd00349">
    <property type="entry name" value="Ribosomal_L11"/>
    <property type="match status" value="1"/>
</dbReference>
<dbReference type="FunFam" id="1.10.10.250:FF:000001">
    <property type="entry name" value="50S ribosomal protein L11"/>
    <property type="match status" value="1"/>
</dbReference>
<dbReference type="FunFam" id="3.30.1550.10:FF:000001">
    <property type="entry name" value="50S ribosomal protein L11"/>
    <property type="match status" value="1"/>
</dbReference>
<dbReference type="Gene3D" id="1.10.10.250">
    <property type="entry name" value="Ribosomal protein L11, C-terminal domain"/>
    <property type="match status" value="1"/>
</dbReference>
<dbReference type="Gene3D" id="3.30.1550.10">
    <property type="entry name" value="Ribosomal protein L11/L12, N-terminal domain"/>
    <property type="match status" value="1"/>
</dbReference>
<dbReference type="HAMAP" id="MF_00736">
    <property type="entry name" value="Ribosomal_uL11"/>
    <property type="match status" value="1"/>
</dbReference>
<dbReference type="InterPro" id="IPR000911">
    <property type="entry name" value="Ribosomal_uL11"/>
</dbReference>
<dbReference type="InterPro" id="IPR006519">
    <property type="entry name" value="Ribosomal_uL11_bac-typ"/>
</dbReference>
<dbReference type="InterPro" id="IPR020783">
    <property type="entry name" value="Ribosomal_uL11_C"/>
</dbReference>
<dbReference type="InterPro" id="IPR036769">
    <property type="entry name" value="Ribosomal_uL11_C_sf"/>
</dbReference>
<dbReference type="InterPro" id="IPR020785">
    <property type="entry name" value="Ribosomal_uL11_CS"/>
</dbReference>
<dbReference type="InterPro" id="IPR020784">
    <property type="entry name" value="Ribosomal_uL11_N"/>
</dbReference>
<dbReference type="InterPro" id="IPR036796">
    <property type="entry name" value="Ribosomal_uL11_N_sf"/>
</dbReference>
<dbReference type="NCBIfam" id="TIGR01632">
    <property type="entry name" value="L11_bact"/>
    <property type="match status" value="1"/>
</dbReference>
<dbReference type="PANTHER" id="PTHR11661">
    <property type="entry name" value="60S RIBOSOMAL PROTEIN L12"/>
    <property type="match status" value="1"/>
</dbReference>
<dbReference type="PANTHER" id="PTHR11661:SF1">
    <property type="entry name" value="LARGE RIBOSOMAL SUBUNIT PROTEIN UL11M"/>
    <property type="match status" value="1"/>
</dbReference>
<dbReference type="Pfam" id="PF00298">
    <property type="entry name" value="Ribosomal_L11"/>
    <property type="match status" value="1"/>
</dbReference>
<dbReference type="Pfam" id="PF03946">
    <property type="entry name" value="Ribosomal_L11_N"/>
    <property type="match status" value="1"/>
</dbReference>
<dbReference type="SMART" id="SM00649">
    <property type="entry name" value="RL11"/>
    <property type="match status" value="1"/>
</dbReference>
<dbReference type="SUPFAM" id="SSF54747">
    <property type="entry name" value="Ribosomal L11/L12e N-terminal domain"/>
    <property type="match status" value="1"/>
</dbReference>
<dbReference type="SUPFAM" id="SSF46906">
    <property type="entry name" value="Ribosomal protein L11, C-terminal domain"/>
    <property type="match status" value="1"/>
</dbReference>
<dbReference type="PROSITE" id="PS00359">
    <property type="entry name" value="RIBOSOMAL_L11"/>
    <property type="match status" value="1"/>
</dbReference>
<reference key="1">
    <citation type="journal article" date="2003" name="Nucleic Acids Res.">
        <title>Genome sequence of Chlamydophila caviae (Chlamydia psittaci GPIC): examining the role of niche-specific genes in the evolution of the Chlamydiaceae.</title>
        <authorList>
            <person name="Read T.D."/>
            <person name="Myers G.S.A."/>
            <person name="Brunham R.C."/>
            <person name="Nelson W.C."/>
            <person name="Paulsen I.T."/>
            <person name="Heidelberg J.F."/>
            <person name="Holtzapple E.K."/>
            <person name="Khouri H.M."/>
            <person name="Federova N.B."/>
            <person name="Carty H.A."/>
            <person name="Umayam L.A."/>
            <person name="Haft D.H."/>
            <person name="Peterson J.D."/>
            <person name="Beanan M.J."/>
            <person name="White O."/>
            <person name="Salzberg S.L."/>
            <person name="Hsia R.-C."/>
            <person name="McClarty G."/>
            <person name="Rank R.G."/>
            <person name="Bavoil P.M."/>
            <person name="Fraser C.M."/>
        </authorList>
    </citation>
    <scope>NUCLEOTIDE SEQUENCE [LARGE SCALE GENOMIC DNA]</scope>
    <source>
        <strain>ATCC VR-813 / DSM 19441 / 03DC25 / GPIC</strain>
    </source>
</reference>
<comment type="function">
    <text evidence="1">Forms part of the ribosomal stalk which helps the ribosome interact with GTP-bound translation factors.</text>
</comment>
<comment type="subunit">
    <text evidence="1">Part of the ribosomal stalk of the 50S ribosomal subunit. Interacts with L10 and the large rRNA to form the base of the stalk. L10 forms an elongated spine to which L12 dimers bind in a sequential fashion forming a multimeric L10(L12)X complex.</text>
</comment>
<comment type="PTM">
    <text evidence="1">One or more lysine residues are methylated.</text>
</comment>
<comment type="similarity">
    <text evidence="1">Belongs to the universal ribosomal protein uL11 family.</text>
</comment>
<organism>
    <name type="scientific">Chlamydia caviae (strain ATCC VR-813 / DSM 19441 / 03DC25 / GPIC)</name>
    <name type="common">Chlamydophila caviae</name>
    <dbReference type="NCBI Taxonomy" id="227941"/>
    <lineage>
        <taxon>Bacteria</taxon>
        <taxon>Pseudomonadati</taxon>
        <taxon>Chlamydiota</taxon>
        <taxon>Chlamydiia</taxon>
        <taxon>Chlamydiales</taxon>
        <taxon>Chlamydiaceae</taxon>
        <taxon>Chlamydia/Chlamydophila group</taxon>
        <taxon>Chlamydia</taxon>
    </lineage>
</organism>
<protein>
    <recommendedName>
        <fullName evidence="1">Large ribosomal subunit protein uL11</fullName>
    </recommendedName>
    <alternativeName>
        <fullName evidence="2">50S ribosomal protein L11</fullName>
    </alternativeName>
</protein>
<gene>
    <name evidence="1" type="primary">rplK</name>
    <name type="ordered locus">CCA_00695</name>
</gene>